<organism>
    <name type="scientific">Ostreococcus tauri</name>
    <dbReference type="NCBI Taxonomy" id="70448"/>
    <lineage>
        <taxon>Eukaryota</taxon>
        <taxon>Viridiplantae</taxon>
        <taxon>Chlorophyta</taxon>
        <taxon>Mamiellophyceae</taxon>
        <taxon>Mamiellales</taxon>
        <taxon>Bathycoccaceae</taxon>
        <taxon>Ostreococcus</taxon>
    </lineage>
</organism>
<dbReference type="EMBL" id="CAID01000001">
    <property type="protein sequence ID" value="CAL50498.1"/>
    <property type="molecule type" value="Genomic_DNA"/>
</dbReference>
<dbReference type="RefSeq" id="XP_003074647.1">
    <property type="nucleotide sequence ID" value="XM_003074600.1"/>
</dbReference>
<dbReference type="STRING" id="70448.Q01FJ6"/>
<dbReference type="GeneID" id="9834653"/>
<dbReference type="KEGG" id="ota:OT_ostta01g05970"/>
<dbReference type="eggNOG" id="KOG4020">
    <property type="taxonomic scope" value="Eukaryota"/>
</dbReference>
<dbReference type="InParanoid" id="Q01FJ6"/>
<dbReference type="OMA" id="WARGTAF"/>
<dbReference type="OrthoDB" id="497990at2759"/>
<dbReference type="Proteomes" id="UP000009170">
    <property type="component" value="Chromosome 1"/>
</dbReference>
<dbReference type="GO" id="GO:0005758">
    <property type="term" value="C:mitochondrial intermembrane space"/>
    <property type="evidence" value="ECO:0007669"/>
    <property type="project" value="UniProtKB-SubCell"/>
</dbReference>
<dbReference type="GO" id="GO:0051537">
    <property type="term" value="F:2 iron, 2 sulfur cluster binding"/>
    <property type="evidence" value="ECO:0007669"/>
    <property type="project" value="UniProtKB-UniRule"/>
</dbReference>
<dbReference type="GO" id="GO:0051539">
    <property type="term" value="F:4 iron, 4 sulfur cluster binding"/>
    <property type="evidence" value="ECO:0007669"/>
    <property type="project" value="UniProtKB-KW"/>
</dbReference>
<dbReference type="GO" id="GO:0009055">
    <property type="term" value="F:electron transfer activity"/>
    <property type="evidence" value="ECO:0007669"/>
    <property type="project" value="UniProtKB-UniRule"/>
</dbReference>
<dbReference type="GO" id="GO:0046872">
    <property type="term" value="F:metal ion binding"/>
    <property type="evidence" value="ECO:0007669"/>
    <property type="project" value="UniProtKB-KW"/>
</dbReference>
<dbReference type="GO" id="GO:0016226">
    <property type="term" value="P:iron-sulfur cluster assembly"/>
    <property type="evidence" value="ECO:0007669"/>
    <property type="project" value="UniProtKB-UniRule"/>
</dbReference>
<dbReference type="HAMAP" id="MF_03115">
    <property type="entry name" value="Anamorsin"/>
    <property type="match status" value="1"/>
</dbReference>
<dbReference type="InterPro" id="IPR007785">
    <property type="entry name" value="Anamorsin"/>
</dbReference>
<dbReference type="InterPro" id="IPR046408">
    <property type="entry name" value="CIAPIN1"/>
</dbReference>
<dbReference type="PANTHER" id="PTHR13273">
    <property type="entry name" value="ANAMORSIN"/>
    <property type="match status" value="1"/>
</dbReference>
<dbReference type="PANTHER" id="PTHR13273:SF14">
    <property type="entry name" value="ANAMORSIN"/>
    <property type="match status" value="1"/>
</dbReference>
<dbReference type="Pfam" id="PF05093">
    <property type="entry name" value="CIAPIN1"/>
    <property type="match status" value="1"/>
</dbReference>
<accession>Q01FJ6</accession>
<evidence type="ECO:0000255" key="1">
    <source>
        <dbReference type="HAMAP-Rule" id="MF_03115"/>
    </source>
</evidence>
<reference key="1">
    <citation type="journal article" date="2006" name="Proc. Natl. Acad. Sci. U.S.A.">
        <title>Genome analysis of the smallest free-living eukaryote Ostreococcus tauri unveils many unique features.</title>
        <authorList>
            <person name="Derelle E."/>
            <person name="Ferraz C."/>
            <person name="Rombauts S."/>
            <person name="Rouze P."/>
            <person name="Worden A.Z."/>
            <person name="Robbens S."/>
            <person name="Partensky F."/>
            <person name="Degroeve S."/>
            <person name="Echeynie S."/>
            <person name="Cooke R."/>
            <person name="Saeys Y."/>
            <person name="Wuyts J."/>
            <person name="Jabbari K."/>
            <person name="Bowler C."/>
            <person name="Panaud O."/>
            <person name="Piegu B."/>
            <person name="Ball S.G."/>
            <person name="Ral J.-P."/>
            <person name="Bouget F.-Y."/>
            <person name="Piganeau G."/>
            <person name="De Baets B."/>
            <person name="Picard A."/>
            <person name="Delseny M."/>
            <person name="Demaille J."/>
            <person name="Van de Peer Y."/>
            <person name="Moreau H."/>
        </authorList>
    </citation>
    <scope>NUCLEOTIDE SEQUENCE [LARGE SCALE GENOMIC DNA]</scope>
    <source>
        <strain>OTTH0595</strain>
    </source>
</reference>
<keyword id="KW-0001">2Fe-2S</keyword>
<keyword id="KW-0004">4Fe-4S</keyword>
<keyword id="KW-0963">Cytoplasm</keyword>
<keyword id="KW-0408">Iron</keyword>
<keyword id="KW-0411">Iron-sulfur</keyword>
<keyword id="KW-0479">Metal-binding</keyword>
<keyword id="KW-0496">Mitochondrion</keyword>
<keyword id="KW-1185">Reference proteome</keyword>
<protein>
    <recommendedName>
        <fullName evidence="1">Anamorsin homolog</fullName>
    </recommendedName>
    <alternativeName>
        <fullName evidence="1">Fe-S cluster assembly protein DRE2 homolog</fullName>
    </alternativeName>
</protein>
<sequence>MRVVVVDLDGVDGADLALERAYERAAALDDGATPATTYARDVRAPGAADGFIGDGATAAMASRTCARAWTALRAGGTVIARGGDAARDAAVLAGFADVVVDATRGVVRGTKPAWARGTAFSLKSRAVRVVTADAGWGADADVDDELIDESALLTELDVNSTAVKYDDCDVGAGKKACKNCTCGRAEAEAAEESANAKSEETFVSACGNCALGDAFRCAGCPYLGQPAFKDTDAVGTKVELDLGDDL</sequence>
<comment type="function">
    <text evidence="1">Component of the cytosolic iron-sulfur (Fe-S) protein assembly (CIA) machinery. Required for the maturation of extramitochondrial Fe-S proteins. Part of an electron transfer chain functioning in an early step of cytosolic Fe-S biogenesis, facilitating the de novo assembly of a [4Fe-4S] cluster on the cytosolic Fe-S scaffold complex. Electrons are transferred from NADPH via a FAD- and FMN-containing diflavin oxidoreductase. Together with the diflavin oxidoreductase, also required for the assembly of the diferric tyrosyl radical cofactor of ribonucleotide reductase (RNR), probably by providing electrons for reduction during radical cofactor maturation in the catalytic small subunit.</text>
</comment>
<comment type="cofactor">
    <cofactor evidence="1">
        <name>[2Fe-2S] cluster</name>
        <dbReference type="ChEBI" id="CHEBI:190135"/>
    </cofactor>
</comment>
<comment type="cofactor">
    <cofactor evidence="1">
        <name>[4Fe-4S] cluster</name>
        <dbReference type="ChEBI" id="CHEBI:49883"/>
    </cofactor>
</comment>
<comment type="subunit">
    <text evidence="1">Monomer.</text>
</comment>
<comment type="subcellular location">
    <subcellularLocation>
        <location evidence="1">Cytoplasm</location>
    </subcellularLocation>
    <subcellularLocation>
        <location evidence="1">Mitochondrion intermembrane space</location>
    </subcellularLocation>
</comment>
<comment type="domain">
    <text evidence="1">The C-terminal domain binds 2 Fe-S clusters but is otherwise mostly in an intrinsically disordered conformation.</text>
</comment>
<comment type="domain">
    <text evidence="1">The N-terminal domain has structural similarity with S-adenosyl-L-methionine-dependent methyltransferases, but does not bind S-adenosyl-L-methionine. It is required for correct assembly of the 2 Fe-S clusters.</text>
</comment>
<comment type="domain">
    <text evidence="1">The twin Cx2C motifs are involved in the recognition by the mitochondrial MIA40-ERV1 disulfide relay system. The formation of 2 disulfide bonds in the Cx2C motifs through dithiol/disulfide exchange reactions effectively traps the protein in the mitochondrial intermembrane space.</text>
</comment>
<comment type="similarity">
    <text evidence="1">Belongs to the anamorsin family.</text>
</comment>
<gene>
    <name type="ordered locus">Ot01g05830</name>
</gene>
<proteinExistence type="inferred from homology"/>
<name>DRE2_OSTTA</name>
<feature type="chain" id="PRO_0000392341" description="Anamorsin homolog">
    <location>
        <begin position="1"/>
        <end position="246"/>
    </location>
</feature>
<feature type="region of interest" description="N-terminal SAM-like domain" evidence="1">
    <location>
        <begin position="1"/>
        <end position="124"/>
    </location>
</feature>
<feature type="region of interest" description="Linker" evidence="1">
    <location>
        <begin position="125"/>
        <end position="158"/>
    </location>
</feature>
<feature type="region of interest" description="Fe-S binding site A" evidence="1">
    <location>
        <begin position="168"/>
        <end position="182"/>
    </location>
</feature>
<feature type="region of interest" description="Fe-S binding site B" evidence="1">
    <location>
        <begin position="206"/>
        <end position="220"/>
    </location>
</feature>
<feature type="short sequence motif" description="Cx2C motif 1" evidence="1">
    <location>
        <begin position="206"/>
        <end position="209"/>
    </location>
</feature>
<feature type="short sequence motif" description="Cx2C motif 2" evidence="1">
    <location>
        <begin position="217"/>
        <end position="220"/>
    </location>
</feature>
<feature type="binding site" evidence="1">
    <location>
        <position position="168"/>
    </location>
    <ligand>
        <name>[2Fe-2S] cluster</name>
        <dbReference type="ChEBI" id="CHEBI:190135"/>
    </ligand>
</feature>
<feature type="binding site" evidence="1">
    <location>
        <position position="177"/>
    </location>
    <ligand>
        <name>[2Fe-2S] cluster</name>
        <dbReference type="ChEBI" id="CHEBI:190135"/>
    </ligand>
</feature>
<feature type="binding site" evidence="1">
    <location>
        <position position="180"/>
    </location>
    <ligand>
        <name>[2Fe-2S] cluster</name>
        <dbReference type="ChEBI" id="CHEBI:190135"/>
    </ligand>
</feature>
<feature type="binding site" evidence="1">
    <location>
        <position position="182"/>
    </location>
    <ligand>
        <name>[2Fe-2S] cluster</name>
        <dbReference type="ChEBI" id="CHEBI:190135"/>
    </ligand>
</feature>
<feature type="binding site" evidence="1">
    <location>
        <position position="206"/>
    </location>
    <ligand>
        <name>[4Fe-4S] cluster</name>
        <dbReference type="ChEBI" id="CHEBI:49883"/>
    </ligand>
</feature>
<feature type="binding site" evidence="1">
    <location>
        <position position="209"/>
    </location>
    <ligand>
        <name>[4Fe-4S] cluster</name>
        <dbReference type="ChEBI" id="CHEBI:49883"/>
    </ligand>
</feature>
<feature type="binding site" evidence="1">
    <location>
        <position position="217"/>
    </location>
    <ligand>
        <name>[4Fe-4S] cluster</name>
        <dbReference type="ChEBI" id="CHEBI:49883"/>
    </ligand>
</feature>
<feature type="binding site" evidence="1">
    <location>
        <position position="220"/>
    </location>
    <ligand>
        <name>[4Fe-4S] cluster</name>
        <dbReference type="ChEBI" id="CHEBI:49883"/>
    </ligand>
</feature>